<name>DGOD_XANOM</name>
<feature type="chain" id="PRO_0000352643" description="D-galactonate dehydratase">
    <location>
        <begin position="1"/>
        <end position="382"/>
    </location>
</feature>
<feature type="region of interest" description="Disordered" evidence="3">
    <location>
        <begin position="361"/>
        <end position="382"/>
    </location>
</feature>
<feature type="active site" description="Proton donor" evidence="1">
    <location>
        <position position="185"/>
    </location>
</feature>
<feature type="active site" description="Proton acceptor" evidence="1">
    <location>
        <position position="285"/>
    </location>
</feature>
<feature type="binding site" evidence="2">
    <location>
        <position position="183"/>
    </location>
    <ligand>
        <name>Mg(2+)</name>
        <dbReference type="ChEBI" id="CHEBI:18420"/>
    </ligand>
</feature>
<feature type="binding site" evidence="2">
    <location>
        <position position="209"/>
    </location>
    <ligand>
        <name>Mg(2+)</name>
        <dbReference type="ChEBI" id="CHEBI:18420"/>
    </ligand>
</feature>
<feature type="binding site" evidence="2">
    <location>
        <position position="235"/>
    </location>
    <ligand>
        <name>Mg(2+)</name>
        <dbReference type="ChEBI" id="CHEBI:18420"/>
    </ligand>
</feature>
<feature type="site" description="Increases basicity of active site His" evidence="2">
    <location>
        <position position="258"/>
    </location>
</feature>
<feature type="site" description="Transition state stabilizer" evidence="2">
    <location>
        <position position="310"/>
    </location>
</feature>
<reference key="1">
    <citation type="journal article" date="2005" name="Jpn. Agric. Res. Q.">
        <title>Genome sequence of Xanthomonas oryzae pv. oryzae suggests contribution of large numbers of effector genes and insertion sequences to its race diversity.</title>
        <authorList>
            <person name="Ochiai H."/>
            <person name="Inoue Y."/>
            <person name="Takeya M."/>
            <person name="Sasaki A."/>
            <person name="Kaku H."/>
        </authorList>
    </citation>
    <scope>NUCLEOTIDE SEQUENCE [LARGE SCALE GENOMIC DNA]</scope>
    <source>
        <strain>MAFF 311018</strain>
    </source>
</reference>
<accession>Q2P1Q3</accession>
<evidence type="ECO:0000250" key="1"/>
<evidence type="ECO:0000255" key="2">
    <source>
        <dbReference type="HAMAP-Rule" id="MF_01289"/>
    </source>
</evidence>
<evidence type="ECO:0000256" key="3">
    <source>
        <dbReference type="SAM" id="MobiDB-lite"/>
    </source>
</evidence>
<dbReference type="EC" id="4.2.1.6" evidence="2"/>
<dbReference type="EMBL" id="AP008229">
    <property type="protein sequence ID" value="BAE69524.1"/>
    <property type="molecule type" value="Genomic_DNA"/>
</dbReference>
<dbReference type="RefSeq" id="WP_011408875.1">
    <property type="nucleotide sequence ID" value="NC_007705.1"/>
</dbReference>
<dbReference type="SMR" id="Q2P1Q3"/>
<dbReference type="KEGG" id="xom:XOO2769"/>
<dbReference type="HOGENOM" id="CLU_030273_3_2_6"/>
<dbReference type="UniPathway" id="UPA00081">
    <property type="reaction ID" value="UER00518"/>
</dbReference>
<dbReference type="GO" id="GO:0008869">
    <property type="term" value="F:galactonate dehydratase activity"/>
    <property type="evidence" value="ECO:0007669"/>
    <property type="project" value="UniProtKB-UniRule"/>
</dbReference>
<dbReference type="GO" id="GO:0000287">
    <property type="term" value="F:magnesium ion binding"/>
    <property type="evidence" value="ECO:0007669"/>
    <property type="project" value="UniProtKB-UniRule"/>
</dbReference>
<dbReference type="GO" id="GO:0009063">
    <property type="term" value="P:amino acid catabolic process"/>
    <property type="evidence" value="ECO:0007669"/>
    <property type="project" value="InterPro"/>
</dbReference>
<dbReference type="GO" id="GO:0034194">
    <property type="term" value="P:D-galactonate catabolic process"/>
    <property type="evidence" value="ECO:0007669"/>
    <property type="project" value="UniProtKB-UniRule"/>
</dbReference>
<dbReference type="CDD" id="cd03325">
    <property type="entry name" value="D-galactonate_dehydratase"/>
    <property type="match status" value="1"/>
</dbReference>
<dbReference type="FunFam" id="3.30.390.10:FF:000003">
    <property type="entry name" value="D-galactonate dehydratase"/>
    <property type="match status" value="1"/>
</dbReference>
<dbReference type="Gene3D" id="3.20.20.120">
    <property type="entry name" value="Enolase-like C-terminal domain"/>
    <property type="match status" value="1"/>
</dbReference>
<dbReference type="Gene3D" id="3.30.390.10">
    <property type="entry name" value="Enolase-like, N-terminal domain"/>
    <property type="match status" value="1"/>
</dbReference>
<dbReference type="HAMAP" id="MF_01289">
    <property type="entry name" value="Galacton_dehydrat"/>
    <property type="match status" value="1"/>
</dbReference>
<dbReference type="InterPro" id="IPR034593">
    <property type="entry name" value="DgoD-like"/>
</dbReference>
<dbReference type="InterPro" id="IPR036849">
    <property type="entry name" value="Enolase-like_C_sf"/>
</dbReference>
<dbReference type="InterPro" id="IPR029017">
    <property type="entry name" value="Enolase-like_N"/>
</dbReference>
<dbReference type="InterPro" id="IPR029065">
    <property type="entry name" value="Enolase_C-like"/>
</dbReference>
<dbReference type="InterPro" id="IPR023592">
    <property type="entry name" value="Galactonate_deHydtase"/>
</dbReference>
<dbReference type="InterPro" id="IPR018110">
    <property type="entry name" value="Mandel_Rmase/mucon_lact_enz_CS"/>
</dbReference>
<dbReference type="InterPro" id="IPR013342">
    <property type="entry name" value="Mandelate_racemase_C"/>
</dbReference>
<dbReference type="InterPro" id="IPR013341">
    <property type="entry name" value="Mandelate_racemase_N_dom"/>
</dbReference>
<dbReference type="NCBIfam" id="NF010624">
    <property type="entry name" value="PRK14017.1"/>
    <property type="match status" value="1"/>
</dbReference>
<dbReference type="PANTHER" id="PTHR48080:SF2">
    <property type="entry name" value="D-GALACTONATE DEHYDRATASE"/>
    <property type="match status" value="1"/>
</dbReference>
<dbReference type="PANTHER" id="PTHR48080">
    <property type="entry name" value="D-GALACTONATE DEHYDRATASE-RELATED"/>
    <property type="match status" value="1"/>
</dbReference>
<dbReference type="Pfam" id="PF13378">
    <property type="entry name" value="MR_MLE_C"/>
    <property type="match status" value="1"/>
</dbReference>
<dbReference type="Pfam" id="PF02746">
    <property type="entry name" value="MR_MLE_N"/>
    <property type="match status" value="1"/>
</dbReference>
<dbReference type="SFLD" id="SFLDF00003">
    <property type="entry name" value="D-galactonate_dehydratase"/>
    <property type="match status" value="1"/>
</dbReference>
<dbReference type="SFLD" id="SFLDS00001">
    <property type="entry name" value="Enolase"/>
    <property type="match status" value="1"/>
</dbReference>
<dbReference type="SMART" id="SM00922">
    <property type="entry name" value="MR_MLE"/>
    <property type="match status" value="1"/>
</dbReference>
<dbReference type="SUPFAM" id="SSF51604">
    <property type="entry name" value="Enolase C-terminal domain-like"/>
    <property type="match status" value="1"/>
</dbReference>
<dbReference type="SUPFAM" id="SSF54826">
    <property type="entry name" value="Enolase N-terminal domain-like"/>
    <property type="match status" value="1"/>
</dbReference>
<dbReference type="PROSITE" id="PS00908">
    <property type="entry name" value="MR_MLE_1"/>
    <property type="match status" value="1"/>
</dbReference>
<dbReference type="PROSITE" id="PS00909">
    <property type="entry name" value="MR_MLE_2"/>
    <property type="match status" value="1"/>
</dbReference>
<protein>
    <recommendedName>
        <fullName evidence="2">D-galactonate dehydratase</fullName>
        <shortName evidence="2">GalD</shortName>
        <ecNumber evidence="2">4.2.1.6</ecNumber>
    </recommendedName>
</protein>
<gene>
    <name evidence="2" type="primary">dgoD</name>
    <name type="ordered locus">XOO2769</name>
</gene>
<comment type="function">
    <text evidence="2">Catalyzes the dehydration of D-galactonate to 2-keto-3-deoxy-D-galactonate.</text>
</comment>
<comment type="catalytic activity">
    <reaction evidence="2">
        <text>D-galactonate = 2-dehydro-3-deoxy-D-galactonate + H2O</text>
        <dbReference type="Rhea" id="RHEA:18649"/>
        <dbReference type="ChEBI" id="CHEBI:12931"/>
        <dbReference type="ChEBI" id="CHEBI:15377"/>
        <dbReference type="ChEBI" id="CHEBI:57989"/>
        <dbReference type="EC" id="4.2.1.6"/>
    </reaction>
</comment>
<comment type="cofactor">
    <cofactor evidence="2">
        <name>Mg(2+)</name>
        <dbReference type="ChEBI" id="CHEBI:18420"/>
    </cofactor>
    <text evidence="2">Binds 1 Mg(2+) ion per subunit.</text>
</comment>
<comment type="pathway">
    <text evidence="2">Carbohydrate acid metabolism; D-galactonate degradation; D-glyceraldehyde 3-phosphate and pyruvate from D-galactonate: step 1/3.</text>
</comment>
<comment type="miscellaneous">
    <text evidence="2">Reaction proceeds via an anti dehydration.</text>
</comment>
<comment type="similarity">
    <text evidence="2">Belongs to the mandelate racemase/muconate lactonizing enzyme family. GalD subfamily.</text>
</comment>
<sequence length="382" mass="41926">MKITRLTTYHAAPRWLFLKVETDEGITGWGEPVIEGRARSVEAAVHELAGYVVGKDPARINDLWQTMYRAGFYRGGAILMSAIAGIDQALWDIKGKALGVPVYELLGGLVRDRMKTYRWVGGDRPGAIIQQITDYRALGFDTFKFNGTEEMKLIDSARAVDAAVVKVAEIREAFGNTIDFGIDFHGRVGAPMAKALLRELEPFKPLFVEEPVLAEQAEYYPRLAASTSIPLAAGERMFSRFEFKNVLCAGGIGMVQPDLSHAGGITECVKIAAIAEAYDVGFAPHCPLGPIALAACLHVDFVSHNAVLQEQSIGIHYNEGADLLDYVINKDDFHCVDGSIAALPKPGLGVEIDEDMLKRANENPPDWRNPVWRHSDGSIAEW</sequence>
<organism>
    <name type="scientific">Xanthomonas oryzae pv. oryzae (strain MAFF 311018)</name>
    <dbReference type="NCBI Taxonomy" id="342109"/>
    <lineage>
        <taxon>Bacteria</taxon>
        <taxon>Pseudomonadati</taxon>
        <taxon>Pseudomonadota</taxon>
        <taxon>Gammaproteobacteria</taxon>
        <taxon>Lysobacterales</taxon>
        <taxon>Lysobacteraceae</taxon>
        <taxon>Xanthomonas</taxon>
    </lineage>
</organism>
<proteinExistence type="inferred from homology"/>
<keyword id="KW-0456">Lyase</keyword>
<keyword id="KW-0460">Magnesium</keyword>
<keyword id="KW-0479">Metal-binding</keyword>